<reference key="1">
    <citation type="journal article" date="2004" name="Nature">
        <title>Genome evolution in yeasts.</title>
        <authorList>
            <person name="Dujon B."/>
            <person name="Sherman D."/>
            <person name="Fischer G."/>
            <person name="Durrens P."/>
            <person name="Casaregola S."/>
            <person name="Lafontaine I."/>
            <person name="de Montigny J."/>
            <person name="Marck C."/>
            <person name="Neuveglise C."/>
            <person name="Talla E."/>
            <person name="Goffard N."/>
            <person name="Frangeul L."/>
            <person name="Aigle M."/>
            <person name="Anthouard V."/>
            <person name="Babour A."/>
            <person name="Barbe V."/>
            <person name="Barnay S."/>
            <person name="Blanchin S."/>
            <person name="Beckerich J.-M."/>
            <person name="Beyne E."/>
            <person name="Bleykasten C."/>
            <person name="Boisrame A."/>
            <person name="Boyer J."/>
            <person name="Cattolico L."/>
            <person name="Confanioleri F."/>
            <person name="de Daruvar A."/>
            <person name="Despons L."/>
            <person name="Fabre E."/>
            <person name="Fairhead C."/>
            <person name="Ferry-Dumazet H."/>
            <person name="Groppi A."/>
            <person name="Hantraye F."/>
            <person name="Hennequin C."/>
            <person name="Jauniaux N."/>
            <person name="Joyet P."/>
            <person name="Kachouri R."/>
            <person name="Kerrest A."/>
            <person name="Koszul R."/>
            <person name="Lemaire M."/>
            <person name="Lesur I."/>
            <person name="Ma L."/>
            <person name="Muller H."/>
            <person name="Nicaud J.-M."/>
            <person name="Nikolski M."/>
            <person name="Oztas S."/>
            <person name="Ozier-Kalogeropoulos O."/>
            <person name="Pellenz S."/>
            <person name="Potier S."/>
            <person name="Richard G.-F."/>
            <person name="Straub M.-L."/>
            <person name="Suleau A."/>
            <person name="Swennen D."/>
            <person name="Tekaia F."/>
            <person name="Wesolowski-Louvel M."/>
            <person name="Westhof E."/>
            <person name="Wirth B."/>
            <person name="Zeniou-Meyer M."/>
            <person name="Zivanovic Y."/>
            <person name="Bolotin-Fukuhara M."/>
            <person name="Thierry A."/>
            <person name="Bouchier C."/>
            <person name="Caudron B."/>
            <person name="Scarpelli C."/>
            <person name="Gaillardin C."/>
            <person name="Weissenbach J."/>
            <person name="Wincker P."/>
            <person name="Souciet J.-L."/>
        </authorList>
    </citation>
    <scope>NUCLEOTIDE SEQUENCE [LARGE SCALE GENOMIC DNA]</scope>
    <source>
        <strain>ATCC 36239 / CBS 767 / BCRC 21394 / JCM 1990 / NBRC 0083 / IGC 2968</strain>
    </source>
</reference>
<sequence>MSAADANQVQESLEKLNLDSAPVASTEETEQTASGETEEAADSAQVSDTSASLYVGELNPSVNEALLFEIFSPIGQVASIRVCRDAVTKKSLGYAYVNFHKFEDGEKAIEDLNYSLIEGRPCRIMWSQRDPSLRRNGDGNIFIKNLHPAIDNKALHDTFTAFGKILSCKVATDDMGISKCFGFVHYETAEAAEAAIENVNGMLLNDREVYVGKHISKKDRESKFEEMKANFTNVYAKNIDLDFSEEEFKKLFEAYGKITSIYLEKDHEGKSKGFGFVNFENHESAVKAVDELNDKEINGQKIYVGRAQKKRERLEELKKQYENTRLEKLSKYQGVNLFIKNLDDTIDSEKLEEEFKPFGSITSARVMVDETGKSKGFGFVCFSSPEEATKAITEMNQRMIYGKPLYVALAQRKDVRRSQLEQQIQARNQMRMQNAAATGGIPGQFIPPMFYGQQPGFFPPNGRGNGPFPGPNPQMMMPRGQIPPPQGQWPRPGPNGQPVPVYGMPPVYGGDFNNGANGGRQQRGYYPNRNQNQKGRQQKDLAAIIANAPADQQKRILGEELYPKIVSTGKAQEPEAAGKITGMMLDLDNEEILALLEDDELFNTHFEDALTAFEEYKKSSEAATAEN</sequence>
<feature type="chain" id="PRO_0000295389" description="Polyadenylate-binding protein, cytoplasmic and nuclear">
    <location>
        <begin position="1"/>
        <end position="627"/>
    </location>
</feature>
<feature type="domain" description="RRM 1" evidence="2">
    <location>
        <begin position="51"/>
        <end position="129"/>
    </location>
</feature>
<feature type="domain" description="RRM 2" evidence="2">
    <location>
        <begin position="139"/>
        <end position="216"/>
    </location>
</feature>
<feature type="domain" description="RRM 3" evidence="2">
    <location>
        <begin position="232"/>
        <end position="309"/>
    </location>
</feature>
<feature type="domain" description="RRM 4" evidence="2">
    <location>
        <begin position="335"/>
        <end position="412"/>
    </location>
</feature>
<feature type="domain" description="PABC" evidence="3">
    <location>
        <begin position="537"/>
        <end position="618"/>
    </location>
</feature>
<feature type="region of interest" description="Disordered" evidence="4">
    <location>
        <begin position="1"/>
        <end position="46"/>
    </location>
</feature>
<feature type="region of interest" description="Disordered" evidence="4">
    <location>
        <begin position="511"/>
        <end position="537"/>
    </location>
</feature>
<feature type="compositionally biased region" description="Polar residues" evidence="4">
    <location>
        <begin position="1"/>
        <end position="11"/>
    </location>
</feature>
<feature type="compositionally biased region" description="Low complexity" evidence="4">
    <location>
        <begin position="511"/>
        <end position="535"/>
    </location>
</feature>
<name>PABP_DEBHA</name>
<organism>
    <name type="scientific">Debaryomyces hansenii (strain ATCC 36239 / CBS 767 / BCRC 21394 / JCM 1990 / NBRC 0083 / IGC 2968)</name>
    <name type="common">Yeast</name>
    <name type="synonym">Torulaspora hansenii</name>
    <dbReference type="NCBI Taxonomy" id="284592"/>
    <lineage>
        <taxon>Eukaryota</taxon>
        <taxon>Fungi</taxon>
        <taxon>Dikarya</taxon>
        <taxon>Ascomycota</taxon>
        <taxon>Saccharomycotina</taxon>
        <taxon>Pichiomycetes</taxon>
        <taxon>Debaryomycetaceae</taxon>
        <taxon>Debaryomyces</taxon>
    </lineage>
</organism>
<evidence type="ECO:0000250" key="1"/>
<evidence type="ECO:0000255" key="2">
    <source>
        <dbReference type="PROSITE-ProRule" id="PRU00176"/>
    </source>
</evidence>
<evidence type="ECO:0000255" key="3">
    <source>
        <dbReference type="PROSITE-ProRule" id="PRU00641"/>
    </source>
</evidence>
<evidence type="ECO:0000256" key="4">
    <source>
        <dbReference type="SAM" id="MobiDB-lite"/>
    </source>
</evidence>
<evidence type="ECO:0000305" key="5"/>
<dbReference type="EMBL" id="CR382139">
    <property type="protein sequence ID" value="CAR65959.1"/>
    <property type="molecule type" value="Genomic_DNA"/>
</dbReference>
<dbReference type="RefSeq" id="XP_002770625.1">
    <property type="nucleotide sequence ID" value="XM_002770579.1"/>
</dbReference>
<dbReference type="SMR" id="Q6BI95"/>
<dbReference type="FunCoup" id="Q6BI95">
    <property type="interactions" value="1476"/>
</dbReference>
<dbReference type="STRING" id="284592.Q6BI95"/>
<dbReference type="GeneID" id="8999193"/>
<dbReference type="KEGG" id="dha:DEHA2G12474g"/>
<dbReference type="VEuPathDB" id="FungiDB:DEHA2G12474g"/>
<dbReference type="eggNOG" id="KOG0123">
    <property type="taxonomic scope" value="Eukaryota"/>
</dbReference>
<dbReference type="HOGENOM" id="CLU_012062_22_4_1"/>
<dbReference type="InParanoid" id="Q6BI95"/>
<dbReference type="OMA" id="MNGRMLN"/>
<dbReference type="OrthoDB" id="19742at2759"/>
<dbReference type="Proteomes" id="UP000000599">
    <property type="component" value="Chromosome G"/>
</dbReference>
<dbReference type="GO" id="GO:0010494">
    <property type="term" value="C:cytoplasmic stress granule"/>
    <property type="evidence" value="ECO:0007669"/>
    <property type="project" value="EnsemblFungi"/>
</dbReference>
<dbReference type="GO" id="GO:0071014">
    <property type="term" value="C:post-mRNA release spliceosomal complex"/>
    <property type="evidence" value="ECO:0007669"/>
    <property type="project" value="EnsemblFungi"/>
</dbReference>
<dbReference type="GO" id="GO:0005840">
    <property type="term" value="C:ribosome"/>
    <property type="evidence" value="ECO:0007669"/>
    <property type="project" value="EnsemblFungi"/>
</dbReference>
<dbReference type="GO" id="GO:0140693">
    <property type="term" value="F:molecular condensate scaffold activity"/>
    <property type="evidence" value="ECO:0007669"/>
    <property type="project" value="EnsemblFungi"/>
</dbReference>
<dbReference type="GO" id="GO:0008143">
    <property type="term" value="F:poly(A) binding"/>
    <property type="evidence" value="ECO:0007669"/>
    <property type="project" value="EnsemblFungi"/>
</dbReference>
<dbReference type="GO" id="GO:1990841">
    <property type="term" value="F:promoter-specific chromatin binding"/>
    <property type="evidence" value="ECO:0007669"/>
    <property type="project" value="EnsemblFungi"/>
</dbReference>
<dbReference type="GO" id="GO:0008428">
    <property type="term" value="F:ribonuclease inhibitor activity"/>
    <property type="evidence" value="ECO:0007669"/>
    <property type="project" value="EnsemblFungi"/>
</dbReference>
<dbReference type="GO" id="GO:0031124">
    <property type="term" value="P:mRNA 3'-end processing"/>
    <property type="evidence" value="ECO:0007669"/>
    <property type="project" value="EnsemblFungi"/>
</dbReference>
<dbReference type="GO" id="GO:0051028">
    <property type="term" value="P:mRNA transport"/>
    <property type="evidence" value="ECO:0007669"/>
    <property type="project" value="UniProtKB-KW"/>
</dbReference>
<dbReference type="GO" id="GO:0000289">
    <property type="term" value="P:nuclear-transcribed mRNA poly(A) tail shortening"/>
    <property type="evidence" value="ECO:0007669"/>
    <property type="project" value="EnsemblFungi"/>
</dbReference>
<dbReference type="GO" id="GO:0060211">
    <property type="term" value="P:regulation of nuclear-transcribed mRNA poly(A) tail shortening"/>
    <property type="evidence" value="ECO:0007669"/>
    <property type="project" value="EnsemblFungi"/>
</dbReference>
<dbReference type="GO" id="GO:0006446">
    <property type="term" value="P:regulation of translational initiation"/>
    <property type="evidence" value="ECO:0007669"/>
    <property type="project" value="EnsemblFungi"/>
</dbReference>
<dbReference type="CDD" id="cd12378">
    <property type="entry name" value="RRM1_I_PABPs"/>
    <property type="match status" value="1"/>
</dbReference>
<dbReference type="CDD" id="cd12379">
    <property type="entry name" value="RRM2_I_PABPs"/>
    <property type="match status" value="1"/>
</dbReference>
<dbReference type="CDD" id="cd12380">
    <property type="entry name" value="RRM3_I_PABPs"/>
    <property type="match status" value="1"/>
</dbReference>
<dbReference type="CDD" id="cd12381">
    <property type="entry name" value="RRM4_I_PABPs"/>
    <property type="match status" value="1"/>
</dbReference>
<dbReference type="FunFam" id="1.10.1900.10:FF:000008">
    <property type="entry name" value="Polyadenylate-binding protein"/>
    <property type="match status" value="1"/>
</dbReference>
<dbReference type="FunFam" id="3.30.70.330:FF:000003">
    <property type="entry name" value="Polyadenylate-binding protein"/>
    <property type="match status" value="1"/>
</dbReference>
<dbReference type="FunFam" id="3.30.70.330:FF:000211">
    <property type="entry name" value="Polyadenylate-binding protein"/>
    <property type="match status" value="1"/>
</dbReference>
<dbReference type="FunFam" id="3.30.70.330:FF:000384">
    <property type="entry name" value="Polyadenylate-binding protein"/>
    <property type="match status" value="1"/>
</dbReference>
<dbReference type="FunFam" id="3.30.70.330:FF:000385">
    <property type="entry name" value="Polyadenylate-binding protein"/>
    <property type="match status" value="1"/>
</dbReference>
<dbReference type="Gene3D" id="3.30.70.330">
    <property type="match status" value="4"/>
</dbReference>
<dbReference type="Gene3D" id="1.10.1900.10">
    <property type="entry name" value="c-terminal domain of poly(a) binding protein"/>
    <property type="match status" value="1"/>
</dbReference>
<dbReference type="InterPro" id="IPR012677">
    <property type="entry name" value="Nucleotide-bd_a/b_plait_sf"/>
</dbReference>
<dbReference type="InterPro" id="IPR036053">
    <property type="entry name" value="PABP-dom"/>
</dbReference>
<dbReference type="InterPro" id="IPR006515">
    <property type="entry name" value="PABP_1234"/>
</dbReference>
<dbReference type="InterPro" id="IPR002004">
    <property type="entry name" value="PABP_HYD_C"/>
</dbReference>
<dbReference type="InterPro" id="IPR034364">
    <property type="entry name" value="PABP_RRM1"/>
</dbReference>
<dbReference type="InterPro" id="IPR035979">
    <property type="entry name" value="RBD_domain_sf"/>
</dbReference>
<dbReference type="InterPro" id="IPR045305">
    <property type="entry name" value="RRM2_I_PABPs"/>
</dbReference>
<dbReference type="InterPro" id="IPR000504">
    <property type="entry name" value="RRM_dom"/>
</dbReference>
<dbReference type="InterPro" id="IPR003954">
    <property type="entry name" value="RRM_dom_euk"/>
</dbReference>
<dbReference type="NCBIfam" id="TIGR01628">
    <property type="entry name" value="PABP-1234"/>
    <property type="match status" value="1"/>
</dbReference>
<dbReference type="PANTHER" id="PTHR24012">
    <property type="entry name" value="RNA BINDING PROTEIN"/>
    <property type="match status" value="1"/>
</dbReference>
<dbReference type="Pfam" id="PF00658">
    <property type="entry name" value="MLLE"/>
    <property type="match status" value="1"/>
</dbReference>
<dbReference type="Pfam" id="PF00076">
    <property type="entry name" value="RRM_1"/>
    <property type="match status" value="4"/>
</dbReference>
<dbReference type="SMART" id="SM00517">
    <property type="entry name" value="PolyA"/>
    <property type="match status" value="1"/>
</dbReference>
<dbReference type="SMART" id="SM00360">
    <property type="entry name" value="RRM"/>
    <property type="match status" value="4"/>
</dbReference>
<dbReference type="SMART" id="SM00361">
    <property type="entry name" value="RRM_1"/>
    <property type="match status" value="4"/>
</dbReference>
<dbReference type="SUPFAM" id="SSF63570">
    <property type="entry name" value="PABC (PABP) domain"/>
    <property type="match status" value="1"/>
</dbReference>
<dbReference type="SUPFAM" id="SSF54928">
    <property type="entry name" value="RNA-binding domain, RBD"/>
    <property type="match status" value="2"/>
</dbReference>
<dbReference type="PROSITE" id="PS51309">
    <property type="entry name" value="PABC"/>
    <property type="match status" value="1"/>
</dbReference>
<dbReference type="PROSITE" id="PS50102">
    <property type="entry name" value="RRM"/>
    <property type="match status" value="4"/>
</dbReference>
<keyword id="KW-0963">Cytoplasm</keyword>
<keyword id="KW-0507">mRNA processing</keyword>
<keyword id="KW-0509">mRNA transport</keyword>
<keyword id="KW-0539">Nucleus</keyword>
<keyword id="KW-1185">Reference proteome</keyword>
<keyword id="KW-0677">Repeat</keyword>
<keyword id="KW-0694">RNA-binding</keyword>
<keyword id="KW-0810">Translation regulation</keyword>
<keyword id="KW-0813">Transport</keyword>
<protein>
    <recommendedName>
        <fullName>Polyadenylate-binding protein, cytoplasmic and nuclear</fullName>
        <shortName>PABP</shortName>
        <shortName>Poly(A)-binding protein</shortName>
    </recommendedName>
    <alternativeName>
        <fullName>Polyadenylate tail-binding protein</fullName>
    </alternativeName>
</protein>
<comment type="function">
    <text evidence="1">Binds the poly(A) tail of mRNA. Appears to be an important mediator of the multiple roles of the poly(A) tail in mRNA biogenesis, stability and translation. In the nucleus, involved in both mRNA cleavage and polyadenylation. Is also required for efficient mRNA export to the cytoplasm. Acts in concert with a poly(A)-specific nuclease (PAN) to affect poly(A) tail shortening, which may occur concomitantly with either nucleocytoplasmic mRNA transport or translational initiation. In the cytoplasm, stimulates translation initiation and regulates mRNA decay through translation termination-coupled poly(A) shortening, probably mediated by PAN (By similarity).</text>
</comment>
<comment type="subcellular location">
    <subcellularLocation>
        <location evidence="1">Cytoplasm</location>
    </subcellularLocation>
    <subcellularLocation>
        <location evidence="1">Nucleus</location>
    </subcellularLocation>
</comment>
<comment type="similarity">
    <text evidence="5">Belongs to the polyadenylate-binding protein type-1 family.</text>
</comment>
<proteinExistence type="inferred from homology"/>
<gene>
    <name type="primary">PAB1</name>
    <name type="ordered locus">DEHA2G12474g</name>
</gene>
<accession>Q6BI95</accession>
<accession>B5RUR5</accession>